<gene>
    <name type="ordered locus">UU156</name>
</gene>
<reference key="1">
    <citation type="journal article" date="2000" name="Nature">
        <title>The complete sequence of the mucosal pathogen Ureaplasma urealyticum.</title>
        <authorList>
            <person name="Glass J.I."/>
            <person name="Lefkowitz E.J."/>
            <person name="Glass J.S."/>
            <person name="Heiner C.R."/>
            <person name="Chen E.Y."/>
            <person name="Cassell G.H."/>
        </authorList>
    </citation>
    <scope>NUCLEOTIDE SEQUENCE [LARGE SCALE GENOMIC DNA]</scope>
    <source>
        <strain>ATCC 700970</strain>
    </source>
</reference>
<keyword id="KW-1185">Reference proteome</keyword>
<dbReference type="EMBL" id="AF222894">
    <property type="protein sequence ID" value="AAF30562.1"/>
    <property type="molecule type" value="Genomic_DNA"/>
</dbReference>
<dbReference type="RefSeq" id="WP_010891690.1">
    <property type="nucleotide sequence ID" value="NC_002162.1"/>
</dbReference>
<dbReference type="STRING" id="273119.UU156"/>
<dbReference type="EnsemblBacteria" id="AAF30562">
    <property type="protein sequence ID" value="AAF30562"/>
    <property type="gene ID" value="UU156"/>
</dbReference>
<dbReference type="GeneID" id="29672236"/>
<dbReference type="KEGG" id="uur:UU156"/>
<dbReference type="PATRIC" id="fig|273119.6.peg.162"/>
<dbReference type="HOGENOM" id="CLU_1712485_0_0_14"/>
<dbReference type="OrthoDB" id="9863562at2"/>
<dbReference type="Proteomes" id="UP000000423">
    <property type="component" value="Chromosome"/>
</dbReference>
<sequence>MRSKQWHLSTQDANLANKKYDYIYFRGVNQLYLKRLKKSSNKFFVYKKCKIVPRMISKHLNNDHLINVNDYVPLTKEFIKKSVEKEVKHYLRFISYENKTKQMPELINFLEKSLEDKLFIVAKDYDPLFSVFLRYYIQSLIEKYINELWINEW</sequence>
<proteinExistence type="predicted"/>
<accession>Q9PQY8</accession>
<protein>
    <recommendedName>
        <fullName>Uncharacterized protein UU156</fullName>
    </recommendedName>
</protein>
<organism>
    <name type="scientific">Ureaplasma parvum serovar 3 (strain ATCC 700970)</name>
    <dbReference type="NCBI Taxonomy" id="273119"/>
    <lineage>
        <taxon>Bacteria</taxon>
        <taxon>Bacillati</taxon>
        <taxon>Mycoplasmatota</taxon>
        <taxon>Mycoplasmoidales</taxon>
        <taxon>Mycoplasmoidaceae</taxon>
        <taxon>Ureaplasma</taxon>
    </lineage>
</organism>
<name>Y156_UREPA</name>
<feature type="chain" id="PRO_0000220815" description="Uncharacterized protein UU156">
    <location>
        <begin position="1"/>
        <end position="153"/>
    </location>
</feature>